<proteinExistence type="inferred from homology"/>
<accession>Q2G9D4</accession>
<protein>
    <recommendedName>
        <fullName evidence="1">Sec-independent protein translocase protein TatA</fullName>
    </recommendedName>
</protein>
<sequence length="83" mass="8744">MGGLSLPHLIVLALVVLILFGRGRISEMMGDFGKGIKSFKQGMNDEDSKPVTPPPAQIPPASLQQTPPPAQPAPQPTSTDQAQ</sequence>
<organism>
    <name type="scientific">Novosphingobium aromaticivorans (strain ATCC 700278 / DSM 12444 / CCUG 56034 / CIP 105152 / NBRC 16084 / F199)</name>
    <dbReference type="NCBI Taxonomy" id="279238"/>
    <lineage>
        <taxon>Bacteria</taxon>
        <taxon>Pseudomonadati</taxon>
        <taxon>Pseudomonadota</taxon>
        <taxon>Alphaproteobacteria</taxon>
        <taxon>Sphingomonadales</taxon>
        <taxon>Sphingomonadaceae</taxon>
        <taxon>Novosphingobium</taxon>
    </lineage>
</organism>
<evidence type="ECO:0000255" key="1">
    <source>
        <dbReference type="HAMAP-Rule" id="MF_00236"/>
    </source>
</evidence>
<evidence type="ECO:0000256" key="2">
    <source>
        <dbReference type="SAM" id="MobiDB-lite"/>
    </source>
</evidence>
<reference key="1">
    <citation type="submission" date="2006-01" db="EMBL/GenBank/DDBJ databases">
        <title>Complete sequence of Novosphingobium aromaticivorans DSM 12444.</title>
        <authorList>
            <consortium name="US DOE Joint Genome Institute"/>
            <person name="Copeland A."/>
            <person name="Lucas S."/>
            <person name="Lapidus A."/>
            <person name="Barry K."/>
            <person name="Detter J.C."/>
            <person name="Glavina T."/>
            <person name="Hammon N."/>
            <person name="Israni S."/>
            <person name="Pitluck S."/>
            <person name="Chain P."/>
            <person name="Malfatti S."/>
            <person name="Shin M."/>
            <person name="Vergez L."/>
            <person name="Schmutz J."/>
            <person name="Larimer F."/>
            <person name="Land M."/>
            <person name="Kyrpides N."/>
            <person name="Ivanova N."/>
            <person name="Fredrickson J."/>
            <person name="Balkwill D."/>
            <person name="Romine M.F."/>
            <person name="Richardson P."/>
        </authorList>
    </citation>
    <scope>NUCLEOTIDE SEQUENCE [LARGE SCALE GENOMIC DNA]</scope>
    <source>
        <strain>ATCC 700278 / DSM 12444 / CCUG 56034 / CIP 105152 / NBRC 16084 / F199</strain>
    </source>
</reference>
<dbReference type="EMBL" id="CP000248">
    <property type="protein sequence ID" value="ABD25539.1"/>
    <property type="molecule type" value="Genomic_DNA"/>
</dbReference>
<dbReference type="RefSeq" id="WP_011444753.1">
    <property type="nucleotide sequence ID" value="NC_007794.1"/>
</dbReference>
<dbReference type="SMR" id="Q2G9D4"/>
<dbReference type="STRING" id="279238.Saro_1094"/>
<dbReference type="KEGG" id="nar:Saro_1094"/>
<dbReference type="eggNOG" id="COG1826">
    <property type="taxonomic scope" value="Bacteria"/>
</dbReference>
<dbReference type="HOGENOM" id="CLU_086034_5_0_5"/>
<dbReference type="Proteomes" id="UP000009134">
    <property type="component" value="Chromosome"/>
</dbReference>
<dbReference type="GO" id="GO:0033281">
    <property type="term" value="C:TAT protein transport complex"/>
    <property type="evidence" value="ECO:0007669"/>
    <property type="project" value="UniProtKB-UniRule"/>
</dbReference>
<dbReference type="GO" id="GO:0008320">
    <property type="term" value="F:protein transmembrane transporter activity"/>
    <property type="evidence" value="ECO:0007669"/>
    <property type="project" value="UniProtKB-UniRule"/>
</dbReference>
<dbReference type="GO" id="GO:0043953">
    <property type="term" value="P:protein transport by the Tat complex"/>
    <property type="evidence" value="ECO:0007669"/>
    <property type="project" value="UniProtKB-UniRule"/>
</dbReference>
<dbReference type="Gene3D" id="1.20.5.3310">
    <property type="match status" value="1"/>
</dbReference>
<dbReference type="HAMAP" id="MF_00236">
    <property type="entry name" value="TatA_E"/>
    <property type="match status" value="1"/>
</dbReference>
<dbReference type="InterPro" id="IPR003369">
    <property type="entry name" value="TatA/B/E"/>
</dbReference>
<dbReference type="InterPro" id="IPR006312">
    <property type="entry name" value="TatA/E"/>
</dbReference>
<dbReference type="NCBIfam" id="NF001940">
    <property type="entry name" value="PRK00720.1"/>
    <property type="match status" value="1"/>
</dbReference>
<dbReference type="NCBIfam" id="TIGR01411">
    <property type="entry name" value="tatAE"/>
    <property type="match status" value="1"/>
</dbReference>
<dbReference type="PANTHER" id="PTHR42982">
    <property type="entry name" value="SEC-INDEPENDENT PROTEIN TRANSLOCASE PROTEIN TATA"/>
    <property type="match status" value="1"/>
</dbReference>
<dbReference type="PANTHER" id="PTHR42982:SF1">
    <property type="entry name" value="SEC-INDEPENDENT PROTEIN TRANSLOCASE PROTEIN TATA"/>
    <property type="match status" value="1"/>
</dbReference>
<dbReference type="Pfam" id="PF02416">
    <property type="entry name" value="TatA_B_E"/>
    <property type="match status" value="1"/>
</dbReference>
<keyword id="KW-0997">Cell inner membrane</keyword>
<keyword id="KW-1003">Cell membrane</keyword>
<keyword id="KW-0472">Membrane</keyword>
<keyword id="KW-0653">Protein transport</keyword>
<keyword id="KW-1185">Reference proteome</keyword>
<keyword id="KW-0811">Translocation</keyword>
<keyword id="KW-0812">Transmembrane</keyword>
<keyword id="KW-1133">Transmembrane helix</keyword>
<keyword id="KW-0813">Transport</keyword>
<name>TATA_NOVAD</name>
<feature type="chain" id="PRO_1000044414" description="Sec-independent protein translocase protein TatA">
    <location>
        <begin position="1"/>
        <end position="83"/>
    </location>
</feature>
<feature type="transmembrane region" description="Helical" evidence="1">
    <location>
        <begin position="1"/>
        <end position="21"/>
    </location>
</feature>
<feature type="region of interest" description="Disordered" evidence="2">
    <location>
        <begin position="34"/>
        <end position="83"/>
    </location>
</feature>
<feature type="compositionally biased region" description="Pro residues" evidence="2">
    <location>
        <begin position="66"/>
        <end position="75"/>
    </location>
</feature>
<comment type="function">
    <text evidence="1">Part of the twin-arginine translocation (Tat) system that transports large folded proteins containing a characteristic twin-arginine motif in their signal peptide across membranes. TatA could form the protein-conducting channel of the Tat system.</text>
</comment>
<comment type="subunit">
    <text evidence="1">The Tat system comprises two distinct complexes: a TatABC complex, containing multiple copies of TatA, TatB and TatC subunits, and a separate TatA complex, containing only TatA subunits. Substrates initially bind to the TatABC complex, which probably triggers association of the separate TatA complex to form the active translocon.</text>
</comment>
<comment type="subcellular location">
    <subcellularLocation>
        <location evidence="1">Cell inner membrane</location>
        <topology evidence="1">Single-pass membrane protein</topology>
    </subcellularLocation>
</comment>
<comment type="similarity">
    <text evidence="1">Belongs to the TatA/E family.</text>
</comment>
<gene>
    <name evidence="1" type="primary">tatA</name>
    <name type="ordered locus">Saro_1094</name>
</gene>